<feature type="chain" id="PRO_0000176450" description="Asparagine--tRNA ligase">
    <location>
        <begin position="1"/>
        <end position="430"/>
    </location>
</feature>
<gene>
    <name evidence="1" type="primary">asnS</name>
    <name type="ordered locus">SAR1465</name>
</gene>
<protein>
    <recommendedName>
        <fullName evidence="1">Asparagine--tRNA ligase</fullName>
        <ecNumber evidence="1">6.1.1.22</ecNumber>
    </recommendedName>
    <alternativeName>
        <fullName evidence="1">Asparaginyl-tRNA synthetase</fullName>
        <shortName evidence="1">AsnRS</shortName>
    </alternativeName>
</protein>
<dbReference type="EC" id="6.1.1.22" evidence="1"/>
<dbReference type="EMBL" id="BX571856">
    <property type="protein sequence ID" value="CAG40463.1"/>
    <property type="molecule type" value="Genomic_DNA"/>
</dbReference>
<dbReference type="RefSeq" id="WP_000858795.1">
    <property type="nucleotide sequence ID" value="NC_002952.2"/>
</dbReference>
<dbReference type="SMR" id="Q6GGV5"/>
<dbReference type="KEGG" id="sar:SAR1465"/>
<dbReference type="HOGENOM" id="CLU_004553_2_0_9"/>
<dbReference type="Proteomes" id="UP000000596">
    <property type="component" value="Chromosome"/>
</dbReference>
<dbReference type="GO" id="GO:0005737">
    <property type="term" value="C:cytoplasm"/>
    <property type="evidence" value="ECO:0007669"/>
    <property type="project" value="UniProtKB-SubCell"/>
</dbReference>
<dbReference type="GO" id="GO:0004816">
    <property type="term" value="F:asparagine-tRNA ligase activity"/>
    <property type="evidence" value="ECO:0007669"/>
    <property type="project" value="UniProtKB-UniRule"/>
</dbReference>
<dbReference type="GO" id="GO:0005524">
    <property type="term" value="F:ATP binding"/>
    <property type="evidence" value="ECO:0007669"/>
    <property type="project" value="UniProtKB-UniRule"/>
</dbReference>
<dbReference type="GO" id="GO:0140096">
    <property type="term" value="F:catalytic activity, acting on a protein"/>
    <property type="evidence" value="ECO:0007669"/>
    <property type="project" value="UniProtKB-ARBA"/>
</dbReference>
<dbReference type="GO" id="GO:0003676">
    <property type="term" value="F:nucleic acid binding"/>
    <property type="evidence" value="ECO:0007669"/>
    <property type="project" value="InterPro"/>
</dbReference>
<dbReference type="GO" id="GO:0016740">
    <property type="term" value="F:transferase activity"/>
    <property type="evidence" value="ECO:0007669"/>
    <property type="project" value="UniProtKB-ARBA"/>
</dbReference>
<dbReference type="GO" id="GO:0006421">
    <property type="term" value="P:asparaginyl-tRNA aminoacylation"/>
    <property type="evidence" value="ECO:0007669"/>
    <property type="project" value="UniProtKB-UniRule"/>
</dbReference>
<dbReference type="CDD" id="cd04323">
    <property type="entry name" value="AsnRS_cyto_like_N"/>
    <property type="match status" value="1"/>
</dbReference>
<dbReference type="CDD" id="cd00776">
    <property type="entry name" value="AsxRS_core"/>
    <property type="match status" value="1"/>
</dbReference>
<dbReference type="Gene3D" id="3.30.930.10">
    <property type="entry name" value="Bira Bifunctional Protein, Domain 2"/>
    <property type="match status" value="1"/>
</dbReference>
<dbReference type="Gene3D" id="2.40.50.140">
    <property type="entry name" value="Nucleic acid-binding proteins"/>
    <property type="match status" value="1"/>
</dbReference>
<dbReference type="HAMAP" id="MF_00534">
    <property type="entry name" value="Asn_tRNA_synth"/>
    <property type="match status" value="1"/>
</dbReference>
<dbReference type="InterPro" id="IPR004364">
    <property type="entry name" value="Aa-tRNA-synt_II"/>
</dbReference>
<dbReference type="InterPro" id="IPR006195">
    <property type="entry name" value="aa-tRNA-synth_II"/>
</dbReference>
<dbReference type="InterPro" id="IPR045864">
    <property type="entry name" value="aa-tRNA-synth_II/BPL/LPL"/>
</dbReference>
<dbReference type="InterPro" id="IPR004522">
    <property type="entry name" value="Asn-tRNA-ligase"/>
</dbReference>
<dbReference type="InterPro" id="IPR002312">
    <property type="entry name" value="Asp/Asn-tRNA-synth_IIb"/>
</dbReference>
<dbReference type="InterPro" id="IPR012340">
    <property type="entry name" value="NA-bd_OB-fold"/>
</dbReference>
<dbReference type="InterPro" id="IPR004365">
    <property type="entry name" value="NA-bd_OB_tRNA"/>
</dbReference>
<dbReference type="NCBIfam" id="TIGR00457">
    <property type="entry name" value="asnS"/>
    <property type="match status" value="1"/>
</dbReference>
<dbReference type="NCBIfam" id="NF003037">
    <property type="entry name" value="PRK03932.1"/>
    <property type="match status" value="1"/>
</dbReference>
<dbReference type="NCBIfam" id="NF003483">
    <property type="entry name" value="PRK05159.1"/>
    <property type="match status" value="1"/>
</dbReference>
<dbReference type="PANTHER" id="PTHR22594:SF34">
    <property type="entry name" value="ASPARAGINE--TRNA LIGASE, MITOCHONDRIAL-RELATED"/>
    <property type="match status" value="1"/>
</dbReference>
<dbReference type="PANTHER" id="PTHR22594">
    <property type="entry name" value="ASPARTYL/LYSYL-TRNA SYNTHETASE"/>
    <property type="match status" value="1"/>
</dbReference>
<dbReference type="Pfam" id="PF00152">
    <property type="entry name" value="tRNA-synt_2"/>
    <property type="match status" value="1"/>
</dbReference>
<dbReference type="Pfam" id="PF01336">
    <property type="entry name" value="tRNA_anti-codon"/>
    <property type="match status" value="1"/>
</dbReference>
<dbReference type="PRINTS" id="PR01042">
    <property type="entry name" value="TRNASYNTHASP"/>
</dbReference>
<dbReference type="SUPFAM" id="SSF55681">
    <property type="entry name" value="Class II aaRS and biotin synthetases"/>
    <property type="match status" value="1"/>
</dbReference>
<dbReference type="SUPFAM" id="SSF50249">
    <property type="entry name" value="Nucleic acid-binding proteins"/>
    <property type="match status" value="1"/>
</dbReference>
<dbReference type="PROSITE" id="PS50862">
    <property type="entry name" value="AA_TRNA_LIGASE_II"/>
    <property type="match status" value="1"/>
</dbReference>
<comment type="catalytic activity">
    <reaction evidence="1">
        <text>tRNA(Asn) + L-asparagine + ATP = L-asparaginyl-tRNA(Asn) + AMP + diphosphate + H(+)</text>
        <dbReference type="Rhea" id="RHEA:11180"/>
        <dbReference type="Rhea" id="RHEA-COMP:9659"/>
        <dbReference type="Rhea" id="RHEA-COMP:9674"/>
        <dbReference type="ChEBI" id="CHEBI:15378"/>
        <dbReference type="ChEBI" id="CHEBI:30616"/>
        <dbReference type="ChEBI" id="CHEBI:33019"/>
        <dbReference type="ChEBI" id="CHEBI:58048"/>
        <dbReference type="ChEBI" id="CHEBI:78442"/>
        <dbReference type="ChEBI" id="CHEBI:78515"/>
        <dbReference type="ChEBI" id="CHEBI:456215"/>
        <dbReference type="EC" id="6.1.1.22"/>
    </reaction>
</comment>
<comment type="subunit">
    <text evidence="1">Homodimer.</text>
</comment>
<comment type="subcellular location">
    <subcellularLocation>
        <location evidence="1">Cytoplasm</location>
    </subcellularLocation>
</comment>
<comment type="similarity">
    <text evidence="1">Belongs to the class-II aminoacyl-tRNA synthetase family.</text>
</comment>
<accession>Q6GGV5</accession>
<reference key="1">
    <citation type="journal article" date="2004" name="Proc. Natl. Acad. Sci. U.S.A.">
        <title>Complete genomes of two clinical Staphylococcus aureus strains: evidence for the rapid evolution of virulence and drug resistance.</title>
        <authorList>
            <person name="Holden M.T.G."/>
            <person name="Feil E.J."/>
            <person name="Lindsay J.A."/>
            <person name="Peacock S.J."/>
            <person name="Day N.P.J."/>
            <person name="Enright M.C."/>
            <person name="Foster T.J."/>
            <person name="Moore C.E."/>
            <person name="Hurst L."/>
            <person name="Atkin R."/>
            <person name="Barron A."/>
            <person name="Bason N."/>
            <person name="Bentley S.D."/>
            <person name="Chillingworth C."/>
            <person name="Chillingworth T."/>
            <person name="Churcher C."/>
            <person name="Clark L."/>
            <person name="Corton C."/>
            <person name="Cronin A."/>
            <person name="Doggett J."/>
            <person name="Dowd L."/>
            <person name="Feltwell T."/>
            <person name="Hance Z."/>
            <person name="Harris B."/>
            <person name="Hauser H."/>
            <person name="Holroyd S."/>
            <person name="Jagels K."/>
            <person name="James K.D."/>
            <person name="Lennard N."/>
            <person name="Line A."/>
            <person name="Mayes R."/>
            <person name="Moule S."/>
            <person name="Mungall K."/>
            <person name="Ormond D."/>
            <person name="Quail M.A."/>
            <person name="Rabbinowitsch E."/>
            <person name="Rutherford K.M."/>
            <person name="Sanders M."/>
            <person name="Sharp S."/>
            <person name="Simmonds M."/>
            <person name="Stevens K."/>
            <person name="Whitehead S."/>
            <person name="Barrell B.G."/>
            <person name="Spratt B.G."/>
            <person name="Parkhill J."/>
        </authorList>
    </citation>
    <scope>NUCLEOTIDE SEQUENCE [LARGE SCALE GENOMIC DNA]</scope>
    <source>
        <strain>MRSA252</strain>
    </source>
</reference>
<sequence>MKTTIKQAKDHLNQDVTIGAWLTNKRSSGKIAFLQLRDGTGFMQGVVVKSEVDEEVFKLAKEITQESSLYVTGTITEDNRSDLGYEMQVKSIEVISEAHDYPITPKNHGTEFLMDHRHLWLRSKKQHAVMKIRNEVIRATYEFFNKDGFTKVDPPILTASAPEGTSELFHTKYFDQDAFLSQSGQLYLEAAAMAHGKVFSFGPTFRAEKSKTRRHLIEFWMIEGEMAFTNHAESLEIQEQYVTHVVKSVLENCKLELKMLERDTSKLEKVATPFPRISYDDAIEFLKAEGFDDIEWGEDFGAPHETAIANHYDLPVFITNYPTKIKPFYMQPNPENEETVLCADLIAPEGYGEIIGGSERVDDLELLEQRVKEHGLDEEAYSYYLDLRRYGSVPHCGFGLGLERTVAWISGVEHVRETAPFPRLLNRLYP</sequence>
<evidence type="ECO:0000255" key="1">
    <source>
        <dbReference type="HAMAP-Rule" id="MF_00534"/>
    </source>
</evidence>
<proteinExistence type="inferred from homology"/>
<name>SYN_STAAR</name>
<keyword id="KW-0030">Aminoacyl-tRNA synthetase</keyword>
<keyword id="KW-0067">ATP-binding</keyword>
<keyword id="KW-0963">Cytoplasm</keyword>
<keyword id="KW-0436">Ligase</keyword>
<keyword id="KW-0547">Nucleotide-binding</keyword>
<keyword id="KW-0648">Protein biosynthesis</keyword>
<organism>
    <name type="scientific">Staphylococcus aureus (strain MRSA252)</name>
    <dbReference type="NCBI Taxonomy" id="282458"/>
    <lineage>
        <taxon>Bacteria</taxon>
        <taxon>Bacillati</taxon>
        <taxon>Bacillota</taxon>
        <taxon>Bacilli</taxon>
        <taxon>Bacillales</taxon>
        <taxon>Staphylococcaceae</taxon>
        <taxon>Staphylococcus</taxon>
    </lineage>
</organism>